<proteinExistence type="inferred from homology"/>
<protein>
    <recommendedName>
        <fullName>Alpha-(1-&gt;6)-mannopyranosyltransferase A</fullName>
        <shortName>MptA</shortName>
        <ecNumber>2.4.1.-</ecNumber>
    </recommendedName>
</protein>
<accession>Q8NNM0</accession>
<accession>Q6M3R0</accession>
<comment type="function">
    <text evidence="2">Involved in the latter stages of the biosynthesis of the alpha-(1-&gt;6) mannan core of lipomannan (LM). Catalyzes the addition of alpha-(1-&gt;6)-mannose residue.</text>
</comment>
<comment type="subcellular location">
    <subcellularLocation>
        <location evidence="3">Membrane</location>
        <topology evidence="3">Multi-pass membrane protein</topology>
    </subcellularLocation>
</comment>
<comment type="disruption phenotype">
    <text evidence="2">Cells lacking this gene show a complete loss of LM biosynthesis. Mutant results in the formation of a truncated LM with a reduction of alpha-(1-&gt;6) and alpha-(1-&gt;2) glycosidic linkages.</text>
</comment>
<comment type="similarity">
    <text evidence="3">Belongs to the MptA/B family.</text>
</comment>
<comment type="sequence caution" evidence="3">
    <conflict type="erroneous initiation">
        <sequence resource="EMBL-CDS" id="CAF20514"/>
    </conflict>
    <text>Extended N-terminus.</text>
</comment>
<dbReference type="EC" id="2.4.1.-"/>
<dbReference type="EMBL" id="BA000036">
    <property type="protein sequence ID" value="BAB99566.1"/>
    <property type="molecule type" value="Genomic_DNA"/>
</dbReference>
<dbReference type="EMBL" id="BX927154">
    <property type="protein sequence ID" value="CAF20514.1"/>
    <property type="status" value="ALT_INIT"/>
    <property type="molecule type" value="Genomic_DNA"/>
</dbReference>
<dbReference type="RefSeq" id="NP_601377.1">
    <property type="nucleotide sequence ID" value="NC_003450.3"/>
</dbReference>
<dbReference type="STRING" id="196627.cg2385"/>
<dbReference type="KEGG" id="cgb:cg2385"/>
<dbReference type="KEGG" id="cgl:Cgl2173"/>
<dbReference type="PATRIC" id="fig|196627.13.peg.2110"/>
<dbReference type="eggNOG" id="ENOG502Z9GU">
    <property type="taxonomic scope" value="Bacteria"/>
</dbReference>
<dbReference type="HOGENOM" id="CLU_023913_1_0_11"/>
<dbReference type="OrthoDB" id="5242303at2"/>
<dbReference type="BioCyc" id="CORYNE:G18NG-11765-MONOMER"/>
<dbReference type="Proteomes" id="UP000000582">
    <property type="component" value="Chromosome"/>
</dbReference>
<dbReference type="Proteomes" id="UP000001009">
    <property type="component" value="Chromosome"/>
</dbReference>
<dbReference type="GO" id="GO:0016020">
    <property type="term" value="C:membrane"/>
    <property type="evidence" value="ECO:0007669"/>
    <property type="project" value="UniProtKB-SubCell"/>
</dbReference>
<dbReference type="GO" id="GO:0016757">
    <property type="term" value="F:glycosyltransferase activity"/>
    <property type="evidence" value="ECO:0007669"/>
    <property type="project" value="UniProtKB-KW"/>
</dbReference>
<dbReference type="InterPro" id="IPR017822">
    <property type="entry name" value="MptA-like"/>
</dbReference>
<dbReference type="InterPro" id="IPR049829">
    <property type="entry name" value="MptA/B-like"/>
</dbReference>
<dbReference type="NCBIfam" id="TIGR03459">
    <property type="entry name" value="crt_membr"/>
    <property type="match status" value="1"/>
</dbReference>
<dbReference type="NCBIfam" id="NF038066">
    <property type="entry name" value="MptB"/>
    <property type="match status" value="1"/>
</dbReference>
<evidence type="ECO:0000255" key="1"/>
<evidence type="ECO:0000269" key="2">
    <source>
    </source>
</evidence>
<evidence type="ECO:0000305" key="3"/>
<feature type="chain" id="PRO_0000420591" description="Alpha-(1-&gt;6)-mannopyranosyltransferase A">
    <location>
        <begin position="1"/>
        <end position="490"/>
    </location>
</feature>
<feature type="transmembrane region" description="Helical" evidence="1">
    <location>
        <begin position="34"/>
        <end position="54"/>
    </location>
</feature>
<feature type="transmembrane region" description="Helical" evidence="1">
    <location>
        <begin position="73"/>
        <end position="93"/>
    </location>
</feature>
<feature type="transmembrane region" description="Helical" evidence="1">
    <location>
        <begin position="163"/>
        <end position="183"/>
    </location>
</feature>
<feature type="transmembrane region" description="Helical" evidence="1">
    <location>
        <begin position="194"/>
        <end position="214"/>
    </location>
</feature>
<feature type="transmembrane region" description="Helical" evidence="1">
    <location>
        <begin position="226"/>
        <end position="246"/>
    </location>
</feature>
<feature type="transmembrane region" description="Helical" evidence="1">
    <location>
        <begin position="253"/>
        <end position="273"/>
    </location>
</feature>
<feature type="transmembrane region" description="Helical" evidence="1">
    <location>
        <begin position="290"/>
        <end position="310"/>
    </location>
</feature>
<feature type="transmembrane region" description="Helical" evidence="1">
    <location>
        <begin position="329"/>
        <end position="349"/>
    </location>
</feature>
<feature type="transmembrane region" description="Helical" evidence="1">
    <location>
        <begin position="361"/>
        <end position="381"/>
    </location>
</feature>
<feature type="transmembrane region" description="Helical" evidence="1">
    <location>
        <begin position="398"/>
        <end position="418"/>
    </location>
</feature>
<feature type="transmembrane region" description="Helical" evidence="1">
    <location>
        <begin position="424"/>
        <end position="444"/>
    </location>
</feature>
<feature type="transmembrane region" description="Helical" evidence="1">
    <location>
        <begin position="451"/>
        <end position="471"/>
    </location>
</feature>
<keyword id="KW-0328">Glycosyltransferase</keyword>
<keyword id="KW-0472">Membrane</keyword>
<keyword id="KW-1185">Reference proteome</keyword>
<keyword id="KW-0808">Transferase</keyword>
<keyword id="KW-0812">Transmembrane</keyword>
<keyword id="KW-1133">Transmembrane helix</keyword>
<name>MPTA_CORGL</name>
<sequence>MLLLGSFGGGAIRYRGGVLDALGLNFLAFGHAQGISNTVLWVGQLLLIGAWVHLGRRLFKKKVADDTADAADLGLVKRTLYAMVVPLIFAAPMMSRDVYSYLMQGAMLRDGFDPYTEGAAVNPGPMLLEVSHDWRNTTTPYGPLHLWIGDMITTVVGDNVTLGVVAYKILSIIGLAVTGWSIVRIAQHFGANPAIALWIGVANPVMIIHMIGGMHNESLMVGLVSVGLLLALKKRFVAGVALIAVAVSLKATAAIALPFVVWIGMHHFAGFLATKKGKDSPTLKQQVPAFFATGAAGVAVTGVVVSAITWASGASWGWISEISGNSKVINPLAFPSLVASVITMVAEVFVDDFDYNAVVNVVRSISMLIMLGGLVVCWWLFRQNERRAVTGTAAAYAVAFVFNSVTLPWYYASLISLLGTFKPPMWLIRFAAGASVFIALMFTGSGNHQLYNIVTVIIAAIIAWLATVVIFDDTDPATTATEKPSPHTVS</sequence>
<reference key="1">
    <citation type="journal article" date="2003" name="Appl. Microbiol. Biotechnol.">
        <title>The Corynebacterium glutamicum genome: features and impacts on biotechnological processes.</title>
        <authorList>
            <person name="Ikeda M."/>
            <person name="Nakagawa S."/>
        </authorList>
    </citation>
    <scope>NUCLEOTIDE SEQUENCE [LARGE SCALE GENOMIC DNA]</scope>
    <source>
        <strain>ATCC 13032 / DSM 20300 / JCM 1318 / BCRC 11384 / CCUG 27702 / LMG 3730 / NBRC 12168 / NCIMB 10025 / NRRL B-2784 / 534</strain>
    </source>
</reference>
<reference key="2">
    <citation type="journal article" date="2003" name="J. Biotechnol.">
        <title>The complete Corynebacterium glutamicum ATCC 13032 genome sequence and its impact on the production of L-aspartate-derived amino acids and vitamins.</title>
        <authorList>
            <person name="Kalinowski J."/>
            <person name="Bathe B."/>
            <person name="Bartels D."/>
            <person name="Bischoff N."/>
            <person name="Bott M."/>
            <person name="Burkovski A."/>
            <person name="Dusch N."/>
            <person name="Eggeling L."/>
            <person name="Eikmanns B.J."/>
            <person name="Gaigalat L."/>
            <person name="Goesmann A."/>
            <person name="Hartmann M."/>
            <person name="Huthmacher K."/>
            <person name="Kraemer R."/>
            <person name="Linke B."/>
            <person name="McHardy A.C."/>
            <person name="Meyer F."/>
            <person name="Moeckel B."/>
            <person name="Pfefferle W."/>
            <person name="Puehler A."/>
            <person name="Rey D.A."/>
            <person name="Rueckert C."/>
            <person name="Rupp O."/>
            <person name="Sahm H."/>
            <person name="Wendisch V.F."/>
            <person name="Wiegraebe I."/>
            <person name="Tauch A."/>
        </authorList>
    </citation>
    <scope>NUCLEOTIDE SEQUENCE [LARGE SCALE GENOMIC DNA]</scope>
    <source>
        <strain>ATCC 13032 / DSM 20300 / JCM 1318 / BCRC 11384 / CCUG 27702 / LMG 3730 / NBRC 12168 / NCIMB 10025 / NRRL B-2784 / 534</strain>
    </source>
</reference>
<reference key="3">
    <citation type="journal article" date="2007" name="Mol. Microbiol.">
        <title>Identification of an alpha(1--&gt;6) mannopyranosyltransferase (MptA), involved in Corynebacterium glutamicum lipomanann biosynthesis, and identification of its orthologue in Mycobacterium tuberculosis.</title>
        <authorList>
            <person name="Mishra A.K."/>
            <person name="Alderwick L.J."/>
            <person name="Rittmann D."/>
            <person name="Tatituri R.V."/>
            <person name="Nigou J."/>
            <person name="Gilleron M."/>
            <person name="Eggeling L."/>
            <person name="Besra G.S."/>
        </authorList>
    </citation>
    <scope>FUNCTION</scope>
    <scope>DISRUPTION PHENOTYPE</scope>
    <scope>NOMENCLATURE</scope>
</reference>
<organism>
    <name type="scientific">Corynebacterium glutamicum (strain ATCC 13032 / DSM 20300 / JCM 1318 / BCRC 11384 / CCUG 27702 / LMG 3730 / NBRC 12168 / NCIMB 10025 / NRRL B-2784 / 534)</name>
    <dbReference type="NCBI Taxonomy" id="196627"/>
    <lineage>
        <taxon>Bacteria</taxon>
        <taxon>Bacillati</taxon>
        <taxon>Actinomycetota</taxon>
        <taxon>Actinomycetes</taxon>
        <taxon>Mycobacteriales</taxon>
        <taxon>Corynebacteriaceae</taxon>
        <taxon>Corynebacterium</taxon>
    </lineage>
</organism>
<gene>
    <name type="primary">mptA</name>
    <name type="ordered locus">Cgl2173</name>
    <name type="ordered locus">cg2385</name>
</gene>